<reference key="1">
    <citation type="journal article" date="2006" name="J. Bacteriol.">
        <title>Complete genome sequence of Yersinia pestis strains Antiqua and Nepal516: evidence of gene reduction in an emerging pathogen.</title>
        <authorList>
            <person name="Chain P.S.G."/>
            <person name="Hu P."/>
            <person name="Malfatti S.A."/>
            <person name="Radnedge L."/>
            <person name="Larimer F."/>
            <person name="Vergez L.M."/>
            <person name="Worsham P."/>
            <person name="Chu M.C."/>
            <person name="Andersen G.L."/>
        </authorList>
    </citation>
    <scope>NUCLEOTIDE SEQUENCE [LARGE SCALE GENOMIC DNA]</scope>
    <source>
        <strain>Nepal516</strain>
    </source>
</reference>
<reference key="2">
    <citation type="submission" date="2009-04" db="EMBL/GenBank/DDBJ databases">
        <title>Yersinia pestis Nepal516A whole genome shotgun sequencing project.</title>
        <authorList>
            <person name="Plunkett G. III"/>
            <person name="Anderson B.D."/>
            <person name="Baumler D.J."/>
            <person name="Burland V."/>
            <person name="Cabot E.L."/>
            <person name="Glasner J.D."/>
            <person name="Mau B."/>
            <person name="Neeno-Eckwall E."/>
            <person name="Perna N.T."/>
            <person name="Munk A.C."/>
            <person name="Tapia R."/>
            <person name="Green L.D."/>
            <person name="Rogers Y.C."/>
            <person name="Detter J.C."/>
            <person name="Bruce D.C."/>
            <person name="Brettin T.S."/>
        </authorList>
    </citation>
    <scope>NUCLEOTIDE SEQUENCE [LARGE SCALE GENOMIC DNA]</scope>
    <source>
        <strain>Nepal516</strain>
    </source>
</reference>
<comment type="function">
    <text evidence="1">Removes the pyruvyl group from chorismate, with concomitant aromatization of the ring, to provide 4-hydroxybenzoate (4HB) for the ubiquinone pathway.</text>
</comment>
<comment type="catalytic activity">
    <reaction evidence="1">
        <text>chorismate = 4-hydroxybenzoate + pyruvate</text>
        <dbReference type="Rhea" id="RHEA:16505"/>
        <dbReference type="ChEBI" id="CHEBI:15361"/>
        <dbReference type="ChEBI" id="CHEBI:17879"/>
        <dbReference type="ChEBI" id="CHEBI:29748"/>
        <dbReference type="EC" id="4.1.3.40"/>
    </reaction>
</comment>
<comment type="pathway">
    <text evidence="1">Cofactor biosynthesis; ubiquinone biosynthesis.</text>
</comment>
<comment type="subunit">
    <text evidence="1">Monomer.</text>
</comment>
<comment type="subcellular location">
    <subcellularLocation>
        <location evidence="1">Cytoplasm</location>
    </subcellularLocation>
</comment>
<comment type="similarity">
    <text evidence="1">Belongs to the UbiC family.</text>
</comment>
<evidence type="ECO:0000255" key="1">
    <source>
        <dbReference type="HAMAP-Rule" id="MF_01632"/>
    </source>
</evidence>
<protein>
    <recommendedName>
        <fullName evidence="1">Chorismate pyruvate-lyase</fullName>
        <shortName evidence="1">CL</shortName>
        <shortName evidence="1">CPL</shortName>
        <ecNumber evidence="1">4.1.3.40</ecNumber>
    </recommendedName>
</protein>
<feature type="chain" id="PRO_0000255914" description="Chorismate pyruvate-lyase">
    <location>
        <begin position="1"/>
        <end position="174"/>
    </location>
</feature>
<feature type="binding site" evidence="1">
    <location>
        <position position="36"/>
    </location>
    <ligand>
        <name>substrate</name>
    </ligand>
</feature>
<feature type="binding site" evidence="1">
    <location>
        <position position="78"/>
    </location>
    <ligand>
        <name>substrate</name>
    </ligand>
</feature>
<feature type="binding site" evidence="1">
    <location>
        <position position="116"/>
    </location>
    <ligand>
        <name>substrate</name>
    </ligand>
</feature>
<feature type="binding site" evidence="1">
    <location>
        <position position="157"/>
    </location>
    <ligand>
        <name>substrate</name>
    </ligand>
</feature>
<organism>
    <name type="scientific">Yersinia pestis bv. Antiqua (strain Nepal516)</name>
    <dbReference type="NCBI Taxonomy" id="377628"/>
    <lineage>
        <taxon>Bacteria</taxon>
        <taxon>Pseudomonadati</taxon>
        <taxon>Pseudomonadota</taxon>
        <taxon>Gammaproteobacteria</taxon>
        <taxon>Enterobacterales</taxon>
        <taxon>Yersiniaceae</taxon>
        <taxon>Yersinia</taxon>
    </lineage>
</organism>
<dbReference type="EC" id="4.1.3.40" evidence="1"/>
<dbReference type="EMBL" id="CP000305">
    <property type="protein sequence ID" value="ABG19686.1"/>
    <property type="molecule type" value="Genomic_DNA"/>
</dbReference>
<dbReference type="EMBL" id="ACNQ01000017">
    <property type="protein sequence ID" value="EEO75878.1"/>
    <property type="molecule type" value="Genomic_DNA"/>
</dbReference>
<dbReference type="RefSeq" id="WP_002209087.1">
    <property type="nucleotide sequence ID" value="NZ_ACNQ01000017.1"/>
</dbReference>
<dbReference type="SMR" id="Q1CE94"/>
<dbReference type="GeneID" id="57974294"/>
<dbReference type="KEGG" id="ypn:YPN_3359"/>
<dbReference type="HOGENOM" id="CLU_096824_1_0_6"/>
<dbReference type="UniPathway" id="UPA00232"/>
<dbReference type="Proteomes" id="UP000008936">
    <property type="component" value="Chromosome"/>
</dbReference>
<dbReference type="GO" id="GO:0005829">
    <property type="term" value="C:cytosol"/>
    <property type="evidence" value="ECO:0007669"/>
    <property type="project" value="TreeGrafter"/>
</dbReference>
<dbReference type="GO" id="GO:0008813">
    <property type="term" value="F:chorismate lyase activity"/>
    <property type="evidence" value="ECO:0007669"/>
    <property type="project" value="UniProtKB-UniRule"/>
</dbReference>
<dbReference type="GO" id="GO:0042866">
    <property type="term" value="P:pyruvate biosynthetic process"/>
    <property type="evidence" value="ECO:0007669"/>
    <property type="project" value="UniProtKB-UniRule"/>
</dbReference>
<dbReference type="GO" id="GO:0006744">
    <property type="term" value="P:ubiquinone biosynthetic process"/>
    <property type="evidence" value="ECO:0007669"/>
    <property type="project" value="UniProtKB-UniRule"/>
</dbReference>
<dbReference type="Gene3D" id="3.40.1410.10">
    <property type="entry name" value="Chorismate lyase-like"/>
    <property type="match status" value="1"/>
</dbReference>
<dbReference type="HAMAP" id="MF_01632">
    <property type="entry name" value="UbiC"/>
    <property type="match status" value="1"/>
</dbReference>
<dbReference type="InterPro" id="IPR007440">
    <property type="entry name" value="Chorismate--pyruvate_lyase"/>
</dbReference>
<dbReference type="InterPro" id="IPR028978">
    <property type="entry name" value="Chorismate_lyase_/UTRA_dom_sf"/>
</dbReference>
<dbReference type="NCBIfam" id="NF008656">
    <property type="entry name" value="PRK11655.1"/>
    <property type="match status" value="1"/>
</dbReference>
<dbReference type="PANTHER" id="PTHR38683">
    <property type="entry name" value="CHORISMATE PYRUVATE-LYASE"/>
    <property type="match status" value="1"/>
</dbReference>
<dbReference type="PANTHER" id="PTHR38683:SF1">
    <property type="entry name" value="CHORISMATE PYRUVATE-LYASE"/>
    <property type="match status" value="1"/>
</dbReference>
<dbReference type="Pfam" id="PF04345">
    <property type="entry name" value="Chor_lyase"/>
    <property type="match status" value="1"/>
</dbReference>
<dbReference type="SUPFAM" id="SSF64288">
    <property type="entry name" value="Chorismate lyase-like"/>
    <property type="match status" value="1"/>
</dbReference>
<keyword id="KW-0963">Cytoplasm</keyword>
<keyword id="KW-0456">Lyase</keyword>
<keyword id="KW-0670">Pyruvate</keyword>
<keyword id="KW-0831">Ubiquinone biosynthesis</keyword>
<gene>
    <name evidence="1" type="primary">ubiC</name>
    <name type="ordered locus">YPN_3359</name>
    <name type="ORF">YP516_3817</name>
</gene>
<proteinExistence type="inferred from homology"/>
<sequence length="174" mass="19916">MFIGDASILKPIQWCATEHPELPADIADWLMELGSMTRRFEQHCQRVHVEPQRECFITRDALGEEAEHLPVSQRYWLREIVLFGDNVPWLLGRTVIPEETLSGPDRALVDLGTLPLGRYLFSGDALTRDYIHVGRQDNLWARRSLLRLSGNPLLLTEVFLPASPLYTHCDSIPK</sequence>
<accession>Q1CE94</accession>
<accession>C4GY78</accession>
<name>UBIC_YERPN</name>